<proteinExistence type="inferred from homology"/>
<feature type="chain" id="PRO_0000131299" description="Large ribosomal subunit protein uL18">
    <location>
        <begin position="1"/>
        <end position="117"/>
    </location>
</feature>
<sequence length="117" mass="13449">MAKLLSRNDARKAKHLRIRNKIRKTTNLPRVFVYKSLQNFYAQLFDDKLNKTIVSLGTSKNKEYSGNIAAAKKLGHEMGALLKTKKIDKIVFDRSGYIYHGRVKAFAEAMREEGVKF</sequence>
<organism>
    <name type="scientific">Mycoplasma mobile (strain ATCC 43663 / 163K / NCTC 11711)</name>
    <name type="common">Mesomycoplasma mobile</name>
    <dbReference type="NCBI Taxonomy" id="267748"/>
    <lineage>
        <taxon>Bacteria</taxon>
        <taxon>Bacillati</taxon>
        <taxon>Mycoplasmatota</taxon>
        <taxon>Mycoplasmoidales</taxon>
        <taxon>Metamycoplasmataceae</taxon>
        <taxon>Mesomycoplasma</taxon>
    </lineage>
</organism>
<reference key="1">
    <citation type="journal article" date="2004" name="Genome Res.">
        <title>The complete genome and proteome of Mycoplasma mobile.</title>
        <authorList>
            <person name="Jaffe J.D."/>
            <person name="Stange-Thomann N."/>
            <person name="Smith C."/>
            <person name="DeCaprio D."/>
            <person name="Fisher S."/>
            <person name="Butler J."/>
            <person name="Calvo S."/>
            <person name="Elkins T."/>
            <person name="FitzGerald M.G."/>
            <person name="Hafez N."/>
            <person name="Kodira C.D."/>
            <person name="Major J."/>
            <person name="Wang S."/>
            <person name="Wilkinson J."/>
            <person name="Nicol R."/>
            <person name="Nusbaum C."/>
            <person name="Birren B."/>
            <person name="Berg H.C."/>
            <person name="Church G.M."/>
        </authorList>
    </citation>
    <scope>NUCLEOTIDE SEQUENCE [LARGE SCALE GENOMIC DNA]</scope>
    <source>
        <strain>ATCC 43663 / NCTC 11711 / 163 K</strain>
    </source>
</reference>
<evidence type="ECO:0000255" key="1">
    <source>
        <dbReference type="HAMAP-Rule" id="MF_01337"/>
    </source>
</evidence>
<evidence type="ECO:0000305" key="2"/>
<gene>
    <name evidence="1" type="primary">rplR</name>
    <name type="ordered locus">MMOB2510</name>
</gene>
<accession>Q6KI39</accession>
<keyword id="KW-1185">Reference proteome</keyword>
<keyword id="KW-0687">Ribonucleoprotein</keyword>
<keyword id="KW-0689">Ribosomal protein</keyword>
<keyword id="KW-0694">RNA-binding</keyword>
<keyword id="KW-0699">rRNA-binding</keyword>
<name>RL18_MYCM1</name>
<protein>
    <recommendedName>
        <fullName evidence="1">Large ribosomal subunit protein uL18</fullName>
    </recommendedName>
    <alternativeName>
        <fullName evidence="2">50S ribosomal protein L18</fullName>
    </alternativeName>
</protein>
<dbReference type="EMBL" id="AE017308">
    <property type="protein sequence ID" value="AAT27737.1"/>
    <property type="molecule type" value="Genomic_DNA"/>
</dbReference>
<dbReference type="RefSeq" id="WP_011264771.1">
    <property type="nucleotide sequence ID" value="NC_006908.1"/>
</dbReference>
<dbReference type="SMR" id="Q6KI39"/>
<dbReference type="STRING" id="267748.MMOB2510"/>
<dbReference type="KEGG" id="mmo:MMOB2510"/>
<dbReference type="eggNOG" id="COG0256">
    <property type="taxonomic scope" value="Bacteria"/>
</dbReference>
<dbReference type="HOGENOM" id="CLU_098841_0_1_14"/>
<dbReference type="OrthoDB" id="9810939at2"/>
<dbReference type="Proteomes" id="UP000009072">
    <property type="component" value="Chromosome"/>
</dbReference>
<dbReference type="GO" id="GO:0005737">
    <property type="term" value="C:cytoplasm"/>
    <property type="evidence" value="ECO:0007669"/>
    <property type="project" value="UniProtKB-ARBA"/>
</dbReference>
<dbReference type="GO" id="GO:1990904">
    <property type="term" value="C:ribonucleoprotein complex"/>
    <property type="evidence" value="ECO:0007669"/>
    <property type="project" value="UniProtKB-KW"/>
</dbReference>
<dbReference type="GO" id="GO:0005840">
    <property type="term" value="C:ribosome"/>
    <property type="evidence" value="ECO:0007669"/>
    <property type="project" value="UniProtKB-KW"/>
</dbReference>
<dbReference type="GO" id="GO:0008097">
    <property type="term" value="F:5S rRNA binding"/>
    <property type="evidence" value="ECO:0007669"/>
    <property type="project" value="TreeGrafter"/>
</dbReference>
<dbReference type="GO" id="GO:0003735">
    <property type="term" value="F:structural constituent of ribosome"/>
    <property type="evidence" value="ECO:0007669"/>
    <property type="project" value="InterPro"/>
</dbReference>
<dbReference type="GO" id="GO:0006412">
    <property type="term" value="P:translation"/>
    <property type="evidence" value="ECO:0007669"/>
    <property type="project" value="UniProtKB-UniRule"/>
</dbReference>
<dbReference type="CDD" id="cd00432">
    <property type="entry name" value="Ribosomal_L18_L5e"/>
    <property type="match status" value="1"/>
</dbReference>
<dbReference type="Gene3D" id="3.30.420.100">
    <property type="match status" value="1"/>
</dbReference>
<dbReference type="HAMAP" id="MF_01337_B">
    <property type="entry name" value="Ribosomal_uL18_B"/>
    <property type="match status" value="1"/>
</dbReference>
<dbReference type="InterPro" id="IPR004389">
    <property type="entry name" value="Ribosomal_uL18_bac-type"/>
</dbReference>
<dbReference type="InterPro" id="IPR005484">
    <property type="entry name" value="Ribosomal_uL18_bac/euk"/>
</dbReference>
<dbReference type="NCBIfam" id="TIGR00060">
    <property type="entry name" value="L18_bact"/>
    <property type="match status" value="1"/>
</dbReference>
<dbReference type="PANTHER" id="PTHR12899">
    <property type="entry name" value="39S RIBOSOMAL PROTEIN L18, MITOCHONDRIAL"/>
    <property type="match status" value="1"/>
</dbReference>
<dbReference type="PANTHER" id="PTHR12899:SF3">
    <property type="entry name" value="LARGE RIBOSOMAL SUBUNIT PROTEIN UL18M"/>
    <property type="match status" value="1"/>
</dbReference>
<dbReference type="Pfam" id="PF00861">
    <property type="entry name" value="Ribosomal_L18p"/>
    <property type="match status" value="1"/>
</dbReference>
<dbReference type="SUPFAM" id="SSF53137">
    <property type="entry name" value="Translational machinery components"/>
    <property type="match status" value="1"/>
</dbReference>
<comment type="function">
    <text evidence="1">This is one of the proteins that bind and probably mediate the attachment of the 5S RNA into the large ribosomal subunit, where it forms part of the central protuberance.</text>
</comment>
<comment type="subunit">
    <text evidence="1">Part of the 50S ribosomal subunit; part of the 5S rRNA/L5/L18/L25 subcomplex. Contacts the 5S and 23S rRNAs.</text>
</comment>
<comment type="similarity">
    <text evidence="1">Belongs to the universal ribosomal protein uL18 family.</text>
</comment>